<feature type="chain" id="PRO_0000340679" description="EF-hand calcium-binding domain-containing protein 8">
    <location>
        <begin position="1"/>
        <end position="203"/>
    </location>
</feature>
<feature type="domain" description="EF-hand 1" evidence="3">
    <location>
        <begin position="111"/>
        <end position="145"/>
    </location>
</feature>
<feature type="domain" description="EF-hand 2" evidence="1">
    <location>
        <begin position="146"/>
        <end position="181"/>
    </location>
</feature>
<feature type="region of interest" description="Disordered" evidence="2">
    <location>
        <begin position="61"/>
        <end position="107"/>
    </location>
</feature>
<feature type="compositionally biased region" description="Polar residues" evidence="2">
    <location>
        <begin position="87"/>
        <end position="107"/>
    </location>
</feature>
<reference key="1">
    <citation type="journal article" date="2005" name="Science">
        <title>The transcriptional landscape of the mammalian genome.</title>
        <authorList>
            <person name="Carninci P."/>
            <person name="Kasukawa T."/>
            <person name="Katayama S."/>
            <person name="Gough J."/>
            <person name="Frith M.C."/>
            <person name="Maeda N."/>
            <person name="Oyama R."/>
            <person name="Ravasi T."/>
            <person name="Lenhard B."/>
            <person name="Wells C."/>
            <person name="Kodzius R."/>
            <person name="Shimokawa K."/>
            <person name="Bajic V.B."/>
            <person name="Brenner S.E."/>
            <person name="Batalov S."/>
            <person name="Forrest A.R."/>
            <person name="Zavolan M."/>
            <person name="Davis M.J."/>
            <person name="Wilming L.G."/>
            <person name="Aidinis V."/>
            <person name="Allen J.E."/>
            <person name="Ambesi-Impiombato A."/>
            <person name="Apweiler R."/>
            <person name="Aturaliya R.N."/>
            <person name="Bailey T.L."/>
            <person name="Bansal M."/>
            <person name="Baxter L."/>
            <person name="Beisel K.W."/>
            <person name="Bersano T."/>
            <person name="Bono H."/>
            <person name="Chalk A.M."/>
            <person name="Chiu K.P."/>
            <person name="Choudhary V."/>
            <person name="Christoffels A."/>
            <person name="Clutterbuck D.R."/>
            <person name="Crowe M.L."/>
            <person name="Dalla E."/>
            <person name="Dalrymple B.P."/>
            <person name="de Bono B."/>
            <person name="Della Gatta G."/>
            <person name="di Bernardo D."/>
            <person name="Down T."/>
            <person name="Engstrom P."/>
            <person name="Fagiolini M."/>
            <person name="Faulkner G."/>
            <person name="Fletcher C.F."/>
            <person name="Fukushima T."/>
            <person name="Furuno M."/>
            <person name="Futaki S."/>
            <person name="Gariboldi M."/>
            <person name="Georgii-Hemming P."/>
            <person name="Gingeras T.R."/>
            <person name="Gojobori T."/>
            <person name="Green R.E."/>
            <person name="Gustincich S."/>
            <person name="Harbers M."/>
            <person name="Hayashi Y."/>
            <person name="Hensch T.K."/>
            <person name="Hirokawa N."/>
            <person name="Hill D."/>
            <person name="Huminiecki L."/>
            <person name="Iacono M."/>
            <person name="Ikeo K."/>
            <person name="Iwama A."/>
            <person name="Ishikawa T."/>
            <person name="Jakt M."/>
            <person name="Kanapin A."/>
            <person name="Katoh M."/>
            <person name="Kawasawa Y."/>
            <person name="Kelso J."/>
            <person name="Kitamura H."/>
            <person name="Kitano H."/>
            <person name="Kollias G."/>
            <person name="Krishnan S.P."/>
            <person name="Kruger A."/>
            <person name="Kummerfeld S.K."/>
            <person name="Kurochkin I.V."/>
            <person name="Lareau L.F."/>
            <person name="Lazarevic D."/>
            <person name="Lipovich L."/>
            <person name="Liu J."/>
            <person name="Liuni S."/>
            <person name="McWilliam S."/>
            <person name="Madan Babu M."/>
            <person name="Madera M."/>
            <person name="Marchionni L."/>
            <person name="Matsuda H."/>
            <person name="Matsuzawa S."/>
            <person name="Miki H."/>
            <person name="Mignone F."/>
            <person name="Miyake S."/>
            <person name="Morris K."/>
            <person name="Mottagui-Tabar S."/>
            <person name="Mulder N."/>
            <person name="Nakano N."/>
            <person name="Nakauchi H."/>
            <person name="Ng P."/>
            <person name="Nilsson R."/>
            <person name="Nishiguchi S."/>
            <person name="Nishikawa S."/>
            <person name="Nori F."/>
            <person name="Ohara O."/>
            <person name="Okazaki Y."/>
            <person name="Orlando V."/>
            <person name="Pang K.C."/>
            <person name="Pavan W.J."/>
            <person name="Pavesi G."/>
            <person name="Pesole G."/>
            <person name="Petrovsky N."/>
            <person name="Piazza S."/>
            <person name="Reed J."/>
            <person name="Reid J.F."/>
            <person name="Ring B.Z."/>
            <person name="Ringwald M."/>
            <person name="Rost B."/>
            <person name="Ruan Y."/>
            <person name="Salzberg S.L."/>
            <person name="Sandelin A."/>
            <person name="Schneider C."/>
            <person name="Schoenbach C."/>
            <person name="Sekiguchi K."/>
            <person name="Semple C.A."/>
            <person name="Seno S."/>
            <person name="Sessa L."/>
            <person name="Sheng Y."/>
            <person name="Shibata Y."/>
            <person name="Shimada H."/>
            <person name="Shimada K."/>
            <person name="Silva D."/>
            <person name="Sinclair B."/>
            <person name="Sperling S."/>
            <person name="Stupka E."/>
            <person name="Sugiura K."/>
            <person name="Sultana R."/>
            <person name="Takenaka Y."/>
            <person name="Taki K."/>
            <person name="Tammoja K."/>
            <person name="Tan S.L."/>
            <person name="Tang S."/>
            <person name="Taylor M.S."/>
            <person name="Tegner J."/>
            <person name="Teichmann S.A."/>
            <person name="Ueda H.R."/>
            <person name="van Nimwegen E."/>
            <person name="Verardo R."/>
            <person name="Wei C.L."/>
            <person name="Yagi K."/>
            <person name="Yamanishi H."/>
            <person name="Zabarovsky E."/>
            <person name="Zhu S."/>
            <person name="Zimmer A."/>
            <person name="Hide W."/>
            <person name="Bult C."/>
            <person name="Grimmond S.M."/>
            <person name="Teasdale R.D."/>
            <person name="Liu E.T."/>
            <person name="Brusic V."/>
            <person name="Quackenbush J."/>
            <person name="Wahlestedt C."/>
            <person name="Mattick J.S."/>
            <person name="Hume D.A."/>
            <person name="Kai C."/>
            <person name="Sasaki D."/>
            <person name="Tomaru Y."/>
            <person name="Fukuda S."/>
            <person name="Kanamori-Katayama M."/>
            <person name="Suzuki M."/>
            <person name="Aoki J."/>
            <person name="Arakawa T."/>
            <person name="Iida J."/>
            <person name="Imamura K."/>
            <person name="Itoh M."/>
            <person name="Kato T."/>
            <person name="Kawaji H."/>
            <person name="Kawagashira N."/>
            <person name="Kawashima T."/>
            <person name="Kojima M."/>
            <person name="Kondo S."/>
            <person name="Konno H."/>
            <person name="Nakano K."/>
            <person name="Ninomiya N."/>
            <person name="Nishio T."/>
            <person name="Okada M."/>
            <person name="Plessy C."/>
            <person name="Shibata K."/>
            <person name="Shiraki T."/>
            <person name="Suzuki S."/>
            <person name="Tagami M."/>
            <person name="Waki K."/>
            <person name="Watahiki A."/>
            <person name="Okamura-Oho Y."/>
            <person name="Suzuki H."/>
            <person name="Kawai J."/>
            <person name="Hayashizaki Y."/>
        </authorList>
    </citation>
    <scope>NUCLEOTIDE SEQUENCE [LARGE SCALE MRNA]</scope>
    <source>
        <strain>C57BL/6J</strain>
        <tissue>Thymus</tissue>
    </source>
</reference>
<gene>
    <name type="primary">Efcab8</name>
</gene>
<accession>Q8C9R9</accession>
<name>EFCB8_MOUSE</name>
<protein>
    <recommendedName>
        <fullName>EF-hand calcium-binding domain-containing protein 8</fullName>
    </recommendedName>
</protein>
<evidence type="ECO:0000255" key="1">
    <source>
        <dbReference type="PROSITE-ProRule" id="PRU00448"/>
    </source>
</evidence>
<evidence type="ECO:0000256" key="2">
    <source>
        <dbReference type="SAM" id="MobiDB-lite"/>
    </source>
</evidence>
<evidence type="ECO:0000305" key="3"/>
<dbReference type="EMBL" id="AK041424">
    <property type="protein sequence ID" value="BAC30941.1"/>
    <property type="molecule type" value="mRNA"/>
</dbReference>
<dbReference type="SMR" id="Q8C9R9"/>
<dbReference type="iPTMnet" id="Q8C9R9"/>
<dbReference type="PhosphoSitePlus" id="Q8C9R9"/>
<dbReference type="jPOST" id="Q8C9R9"/>
<dbReference type="ProteomicsDB" id="277694"/>
<dbReference type="Antibodypedia" id="59265">
    <property type="antibodies" value="5 antibodies from 5 providers"/>
</dbReference>
<dbReference type="Ensembl" id="ENSMUST00000144827.2">
    <property type="protein sequence ID" value="ENSMUSP00000135811.2"/>
    <property type="gene ID" value="ENSMUSG00000044083.13"/>
</dbReference>
<dbReference type="AGR" id="MGI:3644206"/>
<dbReference type="MGI" id="MGI:3644206">
    <property type="gene designation" value="Efcab8"/>
</dbReference>
<dbReference type="VEuPathDB" id="HostDB:ENSMUSG00000044083"/>
<dbReference type="GeneTree" id="ENSGT00940000163617"/>
<dbReference type="HOGENOM" id="CLU_120283_0_0_1"/>
<dbReference type="InParanoid" id="Q8C9R9"/>
<dbReference type="OMA" id="MQPGKIH"/>
<dbReference type="PRO" id="PR:Q8C9R9"/>
<dbReference type="Proteomes" id="UP000000589">
    <property type="component" value="Chromosome 2"/>
</dbReference>
<dbReference type="RNAct" id="Q8C9R9">
    <property type="molecule type" value="protein"/>
</dbReference>
<dbReference type="Bgee" id="ENSMUSG00000044083">
    <property type="expression patterns" value="Expressed in spermatocyte and 12 other cell types or tissues"/>
</dbReference>
<dbReference type="ExpressionAtlas" id="Q8C9R9">
    <property type="expression patterns" value="baseline and differential"/>
</dbReference>
<dbReference type="GO" id="GO:0005509">
    <property type="term" value="F:calcium ion binding"/>
    <property type="evidence" value="ECO:0007669"/>
    <property type="project" value="InterPro"/>
</dbReference>
<dbReference type="Gene3D" id="1.10.238.10">
    <property type="entry name" value="EF-hand"/>
    <property type="match status" value="1"/>
</dbReference>
<dbReference type="InterPro" id="IPR011992">
    <property type="entry name" value="EF-hand-dom_pair"/>
</dbReference>
<dbReference type="InterPro" id="IPR002048">
    <property type="entry name" value="EF_hand_dom"/>
</dbReference>
<dbReference type="InterPro" id="IPR051242">
    <property type="entry name" value="WD-EF-hand_domain"/>
</dbReference>
<dbReference type="PANTHER" id="PTHR44324:SF6">
    <property type="entry name" value="EF-HAND CALCIUM BINDING DOMAIN 8"/>
    <property type="match status" value="1"/>
</dbReference>
<dbReference type="PANTHER" id="PTHR44324">
    <property type="entry name" value="WD40 REPEAT DOMAIN 95"/>
    <property type="match status" value="1"/>
</dbReference>
<dbReference type="SUPFAM" id="SSF47473">
    <property type="entry name" value="EF-hand"/>
    <property type="match status" value="1"/>
</dbReference>
<dbReference type="PROSITE" id="PS50222">
    <property type="entry name" value="EF_HAND_2"/>
    <property type="match status" value="1"/>
</dbReference>
<proteinExistence type="evidence at transcript level"/>
<keyword id="KW-1185">Reference proteome</keyword>
<keyword id="KW-0677">Repeat</keyword>
<sequence>MPSSLHAPLSGEVSAFSLSCPYFRCQDSTGEDLGRFPSPLPFLMCLLLFFPFRARWPRLMSSEKPGESPKPQKMAQPGGSQKKETSRSVPVTDPTSHNSEINQRDQQFSDMHLADLQKVFEKEADENGALKKEGFIRIMKGVLSSMSEEMLELLFLKVDSDCNGFVTWQKYVDYMMREFQGKEEMRKSQYRLRFHLPMTVIPL</sequence>
<organism>
    <name type="scientific">Mus musculus</name>
    <name type="common">Mouse</name>
    <dbReference type="NCBI Taxonomy" id="10090"/>
    <lineage>
        <taxon>Eukaryota</taxon>
        <taxon>Metazoa</taxon>
        <taxon>Chordata</taxon>
        <taxon>Craniata</taxon>
        <taxon>Vertebrata</taxon>
        <taxon>Euteleostomi</taxon>
        <taxon>Mammalia</taxon>
        <taxon>Eutheria</taxon>
        <taxon>Euarchontoglires</taxon>
        <taxon>Glires</taxon>
        <taxon>Rodentia</taxon>
        <taxon>Myomorpha</taxon>
        <taxon>Muroidea</taxon>
        <taxon>Muridae</taxon>
        <taxon>Murinae</taxon>
        <taxon>Mus</taxon>
        <taxon>Mus</taxon>
    </lineage>
</organism>